<proteinExistence type="inferred from homology"/>
<name>ECPB_ECO7I</name>
<comment type="function">
    <text evidence="1">Part of the ecpRABCDE operon, which encodes the E.coli common pilus (ECP). ECP is found in both commensal and pathogenic strains and plays a dual role in early-stage biofilm development and host cell recognition (By similarity).</text>
</comment>
<comment type="induction">
    <text evidence="1">Negatively regulated by H-NS. Positively regulated by IHF and EcpR (By similarity).</text>
</comment>
<comment type="similarity">
    <text evidence="3">Belongs to the EcpB/EcpE family.</text>
</comment>
<evidence type="ECO:0000250" key="1"/>
<evidence type="ECO:0000255" key="2"/>
<evidence type="ECO:0000305" key="3"/>
<feature type="signal peptide" evidence="2">
    <location>
        <begin position="1"/>
        <end position="20"/>
    </location>
</feature>
<feature type="chain" id="PRO_0000369167" description="Probable fimbrial chaperone EcpB">
    <location>
        <begin position="21"/>
        <end position="222"/>
    </location>
</feature>
<sequence length="222" mass="24467">MKKHLLPLALLLSGISPAQALDVGDISSFMNSDSSTLSKTIKNSTDSGRLINIRLERLSSPLDDGQVIAMDKPDELLLTPASLLLPAQASEVIRFFYKGPADEKERYYRIVWFDQALSDAQRDNANRSAVATASARIGTILVVAPRQANYHFQYANGSLTNTGNATLRILAYGPCLKAANGKECKENYYLMPGKSRRFTRVDTADNKGRVALWQGDKFIPVK</sequence>
<accession>B7NK76</accession>
<protein>
    <recommendedName>
        <fullName>Probable fimbrial chaperone EcpB</fullName>
    </recommendedName>
</protein>
<gene>
    <name type="primary">ecpB</name>
    <name type="synonym">matC</name>
    <name type="ordered locus">ECIAI39_0400</name>
</gene>
<dbReference type="EMBL" id="CU928164">
    <property type="protein sequence ID" value="CAR16540.1"/>
    <property type="molecule type" value="Genomic_DNA"/>
</dbReference>
<dbReference type="RefSeq" id="WP_000716407.1">
    <property type="nucleotide sequence ID" value="NC_011750.1"/>
</dbReference>
<dbReference type="RefSeq" id="YP_002406436.1">
    <property type="nucleotide sequence ID" value="NC_011750.1"/>
</dbReference>
<dbReference type="SMR" id="B7NK76"/>
<dbReference type="STRING" id="585057.ECIAI39_0400"/>
<dbReference type="KEGG" id="ect:ECIAI39_0400"/>
<dbReference type="PATRIC" id="fig|585057.6.peg.430"/>
<dbReference type="HOGENOM" id="CLU_106652_0_0_6"/>
<dbReference type="Proteomes" id="UP000000749">
    <property type="component" value="Chromosome"/>
</dbReference>
<dbReference type="Gene3D" id="2.60.40.10">
    <property type="entry name" value="Immunoglobulins"/>
    <property type="match status" value="1"/>
</dbReference>
<dbReference type="InterPro" id="IPR040695">
    <property type="entry name" value="EcpB_C"/>
</dbReference>
<dbReference type="InterPro" id="IPR013783">
    <property type="entry name" value="Ig-like_fold"/>
</dbReference>
<dbReference type="InterPro" id="IPR008962">
    <property type="entry name" value="PapD-like_sf"/>
</dbReference>
<dbReference type="Pfam" id="PF18649">
    <property type="entry name" value="EcpB_C"/>
    <property type="match status" value="1"/>
</dbReference>
<dbReference type="SUPFAM" id="SSF49354">
    <property type="entry name" value="PapD-like"/>
    <property type="match status" value="1"/>
</dbReference>
<reference key="1">
    <citation type="journal article" date="2009" name="PLoS Genet.">
        <title>Organised genome dynamics in the Escherichia coli species results in highly diverse adaptive paths.</title>
        <authorList>
            <person name="Touchon M."/>
            <person name="Hoede C."/>
            <person name="Tenaillon O."/>
            <person name="Barbe V."/>
            <person name="Baeriswyl S."/>
            <person name="Bidet P."/>
            <person name="Bingen E."/>
            <person name="Bonacorsi S."/>
            <person name="Bouchier C."/>
            <person name="Bouvet O."/>
            <person name="Calteau A."/>
            <person name="Chiapello H."/>
            <person name="Clermont O."/>
            <person name="Cruveiller S."/>
            <person name="Danchin A."/>
            <person name="Diard M."/>
            <person name="Dossat C."/>
            <person name="Karoui M.E."/>
            <person name="Frapy E."/>
            <person name="Garry L."/>
            <person name="Ghigo J.M."/>
            <person name="Gilles A.M."/>
            <person name="Johnson J."/>
            <person name="Le Bouguenec C."/>
            <person name="Lescat M."/>
            <person name="Mangenot S."/>
            <person name="Martinez-Jehanne V."/>
            <person name="Matic I."/>
            <person name="Nassif X."/>
            <person name="Oztas S."/>
            <person name="Petit M.A."/>
            <person name="Pichon C."/>
            <person name="Rouy Z."/>
            <person name="Ruf C.S."/>
            <person name="Schneider D."/>
            <person name="Tourret J."/>
            <person name="Vacherie B."/>
            <person name="Vallenet D."/>
            <person name="Medigue C."/>
            <person name="Rocha E.P.C."/>
            <person name="Denamur E."/>
        </authorList>
    </citation>
    <scope>NUCLEOTIDE SEQUENCE [LARGE SCALE GENOMIC DNA]</scope>
    <source>
        <strain>IAI39 / ExPEC</strain>
    </source>
</reference>
<organism>
    <name type="scientific">Escherichia coli O7:K1 (strain IAI39 / ExPEC)</name>
    <dbReference type="NCBI Taxonomy" id="585057"/>
    <lineage>
        <taxon>Bacteria</taxon>
        <taxon>Pseudomonadati</taxon>
        <taxon>Pseudomonadota</taxon>
        <taxon>Gammaproteobacteria</taxon>
        <taxon>Enterobacterales</taxon>
        <taxon>Enterobacteriaceae</taxon>
        <taxon>Escherichia</taxon>
    </lineage>
</organism>
<keyword id="KW-0143">Chaperone</keyword>
<keyword id="KW-1029">Fimbrium biogenesis</keyword>
<keyword id="KW-0732">Signal</keyword>